<proteinExistence type="evidence at transcript level"/>
<sequence>MKSGIRVALVTGSNKGIGLAIVRDLCRLFSGEVVLTARDVARGQAAVQQLQAEGLSPRFHQLDIDDLQSIRTLRDFLLKEYGGLDVLVNNAGIAFKVADPTPFHIQAEVTMKTNFFGTRDVCTELLPLIKPQGRVVNISSMMSLRALKSCSPELQQKFRSETITEEELVGLMNKFAEDTKKGVHQKEGWPSSAYGVTKIGVTVLSRIHARKLSEQRKGDKILLNACCPGWVRTDMAGPSATKSPEEGAETPVYLALLPLDAEGPHGQFVMEKRVEQW</sequence>
<dbReference type="EC" id="1.1.1.184" evidence="1"/>
<dbReference type="EC" id="1.1.1.196" evidence="3"/>
<dbReference type="EC" id="1.1.1.197" evidence="1"/>
<dbReference type="EC" id="1.1.1.71" evidence="1"/>
<dbReference type="EC" id="1.1.1.189" evidence="3"/>
<dbReference type="EMBL" id="AB059654">
    <property type="protein sequence ID" value="BAB97216.1"/>
    <property type="molecule type" value="mRNA"/>
</dbReference>
<dbReference type="RefSeq" id="NP_001306427.1">
    <property type="nucleotide sequence ID" value="NM_001319498.1"/>
</dbReference>
<dbReference type="SMR" id="Q8MI29"/>
<dbReference type="STRING" id="9541.ENSMFAP00000027295"/>
<dbReference type="eggNOG" id="KOG1208">
    <property type="taxonomic scope" value="Eukaryota"/>
</dbReference>
<dbReference type="BRENDA" id="1.1.1.197">
    <property type="organism ID" value="1793"/>
</dbReference>
<dbReference type="Proteomes" id="UP000233100">
    <property type="component" value="Unplaced"/>
</dbReference>
<dbReference type="GO" id="GO:0005737">
    <property type="term" value="C:cytoplasm"/>
    <property type="evidence" value="ECO:0007669"/>
    <property type="project" value="UniProtKB-SubCell"/>
</dbReference>
<dbReference type="GO" id="GO:0016404">
    <property type="term" value="F:15-hydroxyprostaglandin dehydrogenase (NAD+) activity"/>
    <property type="evidence" value="ECO:0007669"/>
    <property type="project" value="UniProtKB-EC"/>
</dbReference>
<dbReference type="GO" id="GO:0047021">
    <property type="term" value="F:15-hydroxyprostaglandin dehydrogenase (NADP+) activity"/>
    <property type="evidence" value="ECO:0000250"/>
    <property type="project" value="UniProtKB"/>
</dbReference>
<dbReference type="GO" id="GO:0047020">
    <property type="term" value="F:15-hydroxyprostaglandin-D dehydrogenase (NADP+) activity"/>
    <property type="evidence" value="ECO:0007669"/>
    <property type="project" value="RHEA"/>
</dbReference>
<dbReference type="GO" id="GO:0047044">
    <property type="term" value="F:androstan-3-alpha,17-beta-diol dehydrogenase (NAD+) activity"/>
    <property type="evidence" value="ECO:0007669"/>
    <property type="project" value="UniProtKB-EC"/>
</dbReference>
<dbReference type="GO" id="GO:0004090">
    <property type="term" value="F:carbonyl reductase (NADPH) activity"/>
    <property type="evidence" value="ECO:0000250"/>
    <property type="project" value="UniProtKB"/>
</dbReference>
<dbReference type="GO" id="GO:0050221">
    <property type="term" value="F:prostaglandin E2 9-reductase activity"/>
    <property type="evidence" value="ECO:0000250"/>
    <property type="project" value="UniProtKB"/>
</dbReference>
<dbReference type="GO" id="GO:0160163">
    <property type="term" value="F:S-nitrosoglutathione reductase (NADPH) activity"/>
    <property type="evidence" value="ECO:0007669"/>
    <property type="project" value="RHEA"/>
</dbReference>
<dbReference type="GO" id="GO:0006629">
    <property type="term" value="P:lipid metabolic process"/>
    <property type="evidence" value="ECO:0007669"/>
    <property type="project" value="UniProtKB-KW"/>
</dbReference>
<dbReference type="GO" id="GO:0042373">
    <property type="term" value="P:vitamin K metabolic process"/>
    <property type="evidence" value="ECO:0000250"/>
    <property type="project" value="UniProtKB"/>
</dbReference>
<dbReference type="GO" id="GO:0006805">
    <property type="term" value="P:xenobiotic metabolic process"/>
    <property type="evidence" value="ECO:0000250"/>
    <property type="project" value="UniProtKB"/>
</dbReference>
<dbReference type="CDD" id="cd05324">
    <property type="entry name" value="carb_red_PTCR-like_SDR_c"/>
    <property type="match status" value="1"/>
</dbReference>
<dbReference type="FunFam" id="3.40.50.720:FF:000164">
    <property type="entry name" value="Carbonyl reductase [NADPH] 1"/>
    <property type="match status" value="1"/>
</dbReference>
<dbReference type="Gene3D" id="3.40.50.720">
    <property type="entry name" value="NAD(P)-binding Rossmann-like Domain"/>
    <property type="match status" value="1"/>
</dbReference>
<dbReference type="InterPro" id="IPR045313">
    <property type="entry name" value="CBR1-like"/>
</dbReference>
<dbReference type="InterPro" id="IPR036291">
    <property type="entry name" value="NAD(P)-bd_dom_sf"/>
</dbReference>
<dbReference type="InterPro" id="IPR020904">
    <property type="entry name" value="Sc_DH/Rdtase_CS"/>
</dbReference>
<dbReference type="InterPro" id="IPR002347">
    <property type="entry name" value="SDR_fam"/>
</dbReference>
<dbReference type="PANTHER" id="PTHR43963">
    <property type="entry name" value="CARBONYL REDUCTASE 1-RELATED"/>
    <property type="match status" value="1"/>
</dbReference>
<dbReference type="PANTHER" id="PTHR43963:SF2">
    <property type="entry name" value="CARBONYL REDUCTASE [NADPH] 1"/>
    <property type="match status" value="1"/>
</dbReference>
<dbReference type="Pfam" id="PF00106">
    <property type="entry name" value="adh_short"/>
    <property type="match status" value="1"/>
</dbReference>
<dbReference type="PRINTS" id="PR00081">
    <property type="entry name" value="GDHRDH"/>
</dbReference>
<dbReference type="PRINTS" id="PR00080">
    <property type="entry name" value="SDRFAMILY"/>
</dbReference>
<dbReference type="SUPFAM" id="SSF51735">
    <property type="entry name" value="NAD(P)-binding Rossmann-fold domains"/>
    <property type="match status" value="1"/>
</dbReference>
<dbReference type="PROSITE" id="PS00061">
    <property type="entry name" value="ADH_SHORT"/>
    <property type="match status" value="1"/>
</dbReference>
<name>CBR1_MACFA</name>
<evidence type="ECO:0000250" key="1">
    <source>
        <dbReference type="UniProtKB" id="P16152"/>
    </source>
</evidence>
<evidence type="ECO:0000250" key="2">
    <source>
        <dbReference type="UniProtKB" id="P48758"/>
    </source>
</evidence>
<evidence type="ECO:0000250" key="3">
    <source>
        <dbReference type="UniProtKB" id="Q28960"/>
    </source>
</evidence>
<evidence type="ECO:0000255" key="4">
    <source>
        <dbReference type="PROSITE-ProRule" id="PRU10001"/>
    </source>
</evidence>
<evidence type="ECO:0000305" key="5"/>
<gene>
    <name evidence="1" type="primary">CBR1</name>
    <name type="synonym">PGDH2</name>
</gene>
<comment type="function">
    <text evidence="1 3">NADPH-dependent reductase with broad substrate specificity. Catalyzes the reduction of a wide variety of carbonyl compounds including quinones, prostaglandins, menadione, plus various xenobiotics. Catalyzes the reduction of the antitumor anthracyclines doxorubicin and daunorubicin to the cardiotoxic compounds doxorubicinol and daunorubicinol (By similarity). Can convert prostaglandin E to prostaglandin F2-alpha (By similarity). Can bind glutathione, which explains its higher affinity for glutathione-conjugated substrates. Catalyzes the reduction of S-nitrosoglutathione. In addition, participates in the glucocorticoid metabolism by catalyzing the NADPH-dependent cortisol/corticosterone into 20beta-dihydrocortisol (20b-DHF) or 20beta-corticosterone (20b-DHB), which are weak agonists of NR3C1 and NR3C2 in adipose tissue (By similarity).</text>
</comment>
<comment type="catalytic activity">
    <reaction evidence="1">
        <text>a secondary alcohol + NADP(+) = a ketone + NADPH + H(+)</text>
        <dbReference type="Rhea" id="RHEA:19257"/>
        <dbReference type="ChEBI" id="CHEBI:15378"/>
        <dbReference type="ChEBI" id="CHEBI:17087"/>
        <dbReference type="ChEBI" id="CHEBI:35681"/>
        <dbReference type="ChEBI" id="CHEBI:57783"/>
        <dbReference type="ChEBI" id="CHEBI:58349"/>
        <dbReference type="EC" id="1.1.1.184"/>
    </reaction>
</comment>
<comment type="catalytic activity">
    <reaction evidence="3">
        <text>prostaglandin F2alpha + NADP(+) = prostaglandin E2 + NADPH + H(+)</text>
        <dbReference type="Rhea" id="RHEA:24508"/>
        <dbReference type="ChEBI" id="CHEBI:15378"/>
        <dbReference type="ChEBI" id="CHEBI:57404"/>
        <dbReference type="ChEBI" id="CHEBI:57783"/>
        <dbReference type="ChEBI" id="CHEBI:58349"/>
        <dbReference type="ChEBI" id="CHEBI:606564"/>
        <dbReference type="EC" id="1.1.1.189"/>
    </reaction>
    <physiologicalReaction direction="right-to-left" evidence="3">
        <dbReference type="Rhea" id="RHEA:24510"/>
    </physiologicalReaction>
</comment>
<comment type="catalytic activity">
    <reaction evidence="1">
        <text>prostaglandin E1 + NADP(+) = 15-oxoprostaglandin E1 + NADPH + H(+)</text>
        <dbReference type="Rhea" id="RHEA:11636"/>
        <dbReference type="ChEBI" id="CHEBI:15378"/>
        <dbReference type="ChEBI" id="CHEBI:57397"/>
        <dbReference type="ChEBI" id="CHEBI:57401"/>
        <dbReference type="ChEBI" id="CHEBI:57783"/>
        <dbReference type="ChEBI" id="CHEBI:58349"/>
        <dbReference type="EC" id="1.1.1.197"/>
    </reaction>
    <physiologicalReaction direction="left-to-right" evidence="1">
        <dbReference type="Rhea" id="RHEA:11637"/>
    </physiologicalReaction>
</comment>
<comment type="catalytic activity">
    <reaction evidence="3">
        <text>prostaglandin D2 + NADP(+) = 15-oxoprostaglandin D2 + NADPH + H(+)</text>
        <dbReference type="Rhea" id="RHEA:20744"/>
        <dbReference type="ChEBI" id="CHEBI:15378"/>
        <dbReference type="ChEBI" id="CHEBI:57406"/>
        <dbReference type="ChEBI" id="CHEBI:57408"/>
        <dbReference type="ChEBI" id="CHEBI:57783"/>
        <dbReference type="ChEBI" id="CHEBI:58349"/>
        <dbReference type="EC" id="1.1.1.196"/>
    </reaction>
    <physiologicalReaction direction="left-to-right" evidence="3">
        <dbReference type="Rhea" id="RHEA:20745"/>
    </physiologicalReaction>
</comment>
<comment type="catalytic activity">
    <reaction evidence="1">
        <text>menadione + NADPH + H(+) = menadiol + NADP(+)</text>
        <dbReference type="Rhea" id="RHEA:63492"/>
        <dbReference type="ChEBI" id="CHEBI:6746"/>
        <dbReference type="ChEBI" id="CHEBI:15378"/>
        <dbReference type="ChEBI" id="CHEBI:28869"/>
        <dbReference type="ChEBI" id="CHEBI:57783"/>
        <dbReference type="ChEBI" id="CHEBI:58349"/>
    </reaction>
</comment>
<comment type="catalytic activity">
    <reaction evidence="3">
        <text>prostaglandin E2 + NADP(+) = 15-oxoprostaglandin E2 + NADPH + H(+)</text>
        <dbReference type="Rhea" id="RHEA:63476"/>
        <dbReference type="ChEBI" id="CHEBI:15378"/>
        <dbReference type="ChEBI" id="CHEBI:57400"/>
        <dbReference type="ChEBI" id="CHEBI:57783"/>
        <dbReference type="ChEBI" id="CHEBI:58349"/>
        <dbReference type="ChEBI" id="CHEBI:606564"/>
    </reaction>
    <physiologicalReaction direction="left-to-right" evidence="3">
        <dbReference type="Rhea" id="RHEA:63477"/>
    </physiologicalReaction>
</comment>
<comment type="catalytic activity">
    <reaction evidence="3">
        <text>prostaglandin F2alpha + NADP(+) = 15-oxoprostaglandin F2alpha + NADPH + H(+)</text>
        <dbReference type="Rhea" id="RHEA:63480"/>
        <dbReference type="ChEBI" id="CHEBI:15378"/>
        <dbReference type="ChEBI" id="CHEBI:57404"/>
        <dbReference type="ChEBI" id="CHEBI:57783"/>
        <dbReference type="ChEBI" id="CHEBI:58349"/>
        <dbReference type="ChEBI" id="CHEBI:133409"/>
    </reaction>
    <physiologicalReaction direction="left-to-right" evidence="3">
        <dbReference type="Rhea" id="RHEA:63481"/>
    </physiologicalReaction>
</comment>
<comment type="catalytic activity">
    <reaction evidence="1">
        <text>daunorubicin + NADPH + H(+) = 13-dihydrodaunorubicin + NADP(+)</text>
        <dbReference type="Rhea" id="RHEA:63504"/>
        <dbReference type="ChEBI" id="CHEBI:15378"/>
        <dbReference type="ChEBI" id="CHEBI:57783"/>
        <dbReference type="ChEBI" id="CHEBI:58349"/>
        <dbReference type="ChEBI" id="CHEBI:64677"/>
        <dbReference type="ChEBI" id="CHEBI:75296"/>
    </reaction>
    <physiologicalReaction direction="left-to-right" evidence="1">
        <dbReference type="Rhea" id="RHEA:63505"/>
    </physiologicalReaction>
</comment>
<comment type="catalytic activity">
    <reaction evidence="3">
        <text>S-nitrosoglutathione + NADPH + H(+) = S-(hydroxysulfenamide)glutathione + NADP(+)</text>
        <dbReference type="Rhea" id="RHEA:63500"/>
        <dbReference type="ChEBI" id="CHEBI:15378"/>
        <dbReference type="ChEBI" id="CHEBI:57783"/>
        <dbReference type="ChEBI" id="CHEBI:58349"/>
        <dbReference type="ChEBI" id="CHEBI:145544"/>
        <dbReference type="ChEBI" id="CHEBI:229723"/>
    </reaction>
</comment>
<comment type="catalytic activity">
    <reaction evidence="1">
        <text>a primary alcohol + NADP(+) = an aldehyde + NADPH + H(+)</text>
        <dbReference type="Rhea" id="RHEA:15937"/>
        <dbReference type="ChEBI" id="CHEBI:15378"/>
        <dbReference type="ChEBI" id="CHEBI:15734"/>
        <dbReference type="ChEBI" id="CHEBI:17478"/>
        <dbReference type="ChEBI" id="CHEBI:57783"/>
        <dbReference type="ChEBI" id="CHEBI:58349"/>
        <dbReference type="EC" id="1.1.1.71"/>
    </reaction>
</comment>
<comment type="catalytic activity">
    <reaction evidence="1">
        <text>cortisol + NADPH + H(+) = 20beta-dihydrocortisol + NADP(+)</text>
        <dbReference type="Rhea" id="RHEA:70215"/>
        <dbReference type="ChEBI" id="CHEBI:15378"/>
        <dbReference type="ChEBI" id="CHEBI:17650"/>
        <dbReference type="ChEBI" id="CHEBI:57783"/>
        <dbReference type="ChEBI" id="CHEBI:58349"/>
        <dbReference type="ChEBI" id="CHEBI:139311"/>
    </reaction>
    <physiologicalReaction direction="left-to-right" evidence="1">
        <dbReference type="Rhea" id="RHEA:70216"/>
    </physiologicalReaction>
</comment>
<comment type="catalytic activity">
    <reaction evidence="2">
        <text>corticosterone + NADPH + H(+) = 20beta-dihydrocorticosterone + NADP(+)</text>
        <dbReference type="Rhea" id="RHEA:70219"/>
        <dbReference type="ChEBI" id="CHEBI:15378"/>
        <dbReference type="ChEBI" id="CHEBI:16827"/>
        <dbReference type="ChEBI" id="CHEBI:57783"/>
        <dbReference type="ChEBI" id="CHEBI:58349"/>
        <dbReference type="ChEBI" id="CHEBI:189050"/>
    </reaction>
    <physiologicalReaction direction="left-to-right" evidence="2">
        <dbReference type="Rhea" id="RHEA:70220"/>
    </physiologicalReaction>
</comment>
<comment type="subunit">
    <text evidence="3">Monomer.</text>
</comment>
<comment type="subcellular location">
    <subcellularLocation>
        <location evidence="3">Cytoplasm</location>
    </subcellularLocation>
</comment>
<comment type="similarity">
    <text evidence="5">Belongs to the short-chain dehydrogenases/reductases (SDR) family.</text>
</comment>
<organism>
    <name type="scientific">Macaca fascicularis</name>
    <name type="common">Crab-eating macaque</name>
    <name type="synonym">Cynomolgus monkey</name>
    <dbReference type="NCBI Taxonomy" id="9541"/>
    <lineage>
        <taxon>Eukaryota</taxon>
        <taxon>Metazoa</taxon>
        <taxon>Chordata</taxon>
        <taxon>Craniata</taxon>
        <taxon>Vertebrata</taxon>
        <taxon>Euteleostomi</taxon>
        <taxon>Mammalia</taxon>
        <taxon>Eutheria</taxon>
        <taxon>Euarchontoglires</taxon>
        <taxon>Primates</taxon>
        <taxon>Haplorrhini</taxon>
        <taxon>Catarrhini</taxon>
        <taxon>Cercopithecidae</taxon>
        <taxon>Cercopithecinae</taxon>
        <taxon>Macaca</taxon>
    </lineage>
</organism>
<reference key="1">
    <citation type="submission" date="2001-04" db="EMBL/GenBank/DDBJ databases">
        <title>Cloning of prostaglandin dehydrogenase type I cDNA from monkey.</title>
        <authorList>
            <person name="Fujimori K."/>
            <person name="Okada T."/>
            <person name="Habe T."/>
            <person name="Osama H."/>
            <person name="Urade Y."/>
        </authorList>
    </citation>
    <scope>NUCLEOTIDE SEQUENCE [MRNA]</scope>
    <source>
        <tissue>Cornea</tissue>
    </source>
</reference>
<accession>Q8MI29</accession>
<feature type="chain" id="PRO_0000284144" description="Carbonyl reductase [NADPH] 1">
    <location>
        <begin position="1"/>
        <end position="277"/>
    </location>
</feature>
<feature type="active site" description="Proton acceptor" evidence="4">
    <location>
        <position position="194"/>
    </location>
</feature>
<feature type="binding site" evidence="1">
    <location>
        <begin position="10"/>
        <end position="34"/>
    </location>
    <ligand>
        <name>NADP(+)</name>
        <dbReference type="ChEBI" id="CHEBI:58349"/>
    </ligand>
</feature>
<feature type="binding site" evidence="1">
    <location>
        <begin position="63"/>
        <end position="64"/>
    </location>
    <ligand>
        <name>NADP(+)</name>
        <dbReference type="ChEBI" id="CHEBI:58349"/>
    </ligand>
</feature>
<feature type="binding site" evidence="1">
    <location>
        <position position="90"/>
    </location>
    <ligand>
        <name>NADP(+)</name>
        <dbReference type="ChEBI" id="CHEBI:58349"/>
    </ligand>
</feature>
<feature type="binding site" evidence="1">
    <location>
        <begin position="95"/>
        <end position="97"/>
    </location>
    <ligand>
        <name>glutathione</name>
        <dbReference type="ChEBI" id="CHEBI:57925"/>
    </ligand>
</feature>
<feature type="binding site" evidence="1">
    <location>
        <position position="106"/>
    </location>
    <ligand>
        <name>glutathione</name>
        <dbReference type="ChEBI" id="CHEBI:57925"/>
    </ligand>
</feature>
<feature type="binding site" evidence="1">
    <location>
        <position position="140"/>
    </location>
    <ligand>
        <name>substrate</name>
    </ligand>
</feature>
<feature type="binding site" evidence="1">
    <location>
        <begin position="193"/>
        <end position="194"/>
    </location>
    <ligand>
        <name>glutathione</name>
        <dbReference type="ChEBI" id="CHEBI:57925"/>
    </ligand>
</feature>
<feature type="binding site" evidence="1">
    <location>
        <begin position="194"/>
        <end position="198"/>
    </location>
    <ligand>
        <name>NADP(+)</name>
        <dbReference type="ChEBI" id="CHEBI:58349"/>
    </ligand>
</feature>
<feature type="binding site" evidence="1">
    <location>
        <begin position="231"/>
        <end position="233"/>
    </location>
    <ligand>
        <name>NADP(+)</name>
        <dbReference type="ChEBI" id="CHEBI:58349"/>
    </ligand>
</feature>
<feature type="modified residue" description="Phosphoserine" evidence="2">
    <location>
        <position position="30"/>
    </location>
</feature>
<protein>
    <recommendedName>
        <fullName evidence="1">Carbonyl reductase [NADPH] 1</fullName>
        <ecNumber evidence="1">1.1.1.184</ecNumber>
    </recommendedName>
    <alternativeName>
        <fullName>15-hydroxyprostaglandin dehydrogenase [NADP(+)]</fullName>
        <ecNumber evidence="3">1.1.1.196</ecNumber>
        <ecNumber evidence="1">1.1.1.197</ecNumber>
    </alternativeName>
    <alternativeName>
        <fullName evidence="3">20-beta-hydroxysteroid dehydrogenase</fullName>
    </alternativeName>
    <alternativeName>
        <fullName>Alcohol dehydrogenase [NAD(P)+] CBR1</fullName>
        <ecNumber evidence="1">1.1.1.71</ecNumber>
    </alternativeName>
    <alternativeName>
        <fullName evidence="3">Prostaglandin 9-ketoreductase</fullName>
        <shortName evidence="3">PG-9-KR</shortName>
    </alternativeName>
    <alternativeName>
        <fullName evidence="3">Prostaglandin-E(2) 9-reductase</fullName>
        <ecNumber evidence="3">1.1.1.189</ecNumber>
    </alternativeName>
</protein>
<keyword id="KW-0963">Cytoplasm</keyword>
<keyword id="KW-0443">Lipid metabolism</keyword>
<keyword id="KW-0521">NADP</keyword>
<keyword id="KW-0560">Oxidoreductase</keyword>
<keyword id="KW-0597">Phosphoprotein</keyword>
<keyword id="KW-1185">Reference proteome</keyword>